<keyword id="KW-0002">3D-structure</keyword>
<keyword id="KW-0167">Capsid protein</keyword>
<keyword id="KW-1154">Intermediate capsid protein</keyword>
<keyword id="KW-1185">Reference proteome</keyword>
<keyword id="KW-0946">Virion</keyword>
<proteinExistence type="evidence at protein level"/>
<accession>Q8JU54</accession>
<reference key="1">
    <citation type="journal article" date="2002" name="J. Gen. Virol.">
        <title>Common evolutionary origin of aquareoviruses and orthoreoviruses revealed by genome characterization of Golden shiner reovirus, Grass carp reovirus, Striped bass reovirus and golden ide reovirus (genus Aquareovirus, family Reoviridae).</title>
        <authorList>
            <person name="Attoui H."/>
            <person name="Fang Q."/>
            <person name="Mohd Jaafar F."/>
            <person name="Cantaloube J.F."/>
            <person name="Biagini P."/>
            <person name="de Micco P."/>
            <person name="de Lamballerie X."/>
        </authorList>
    </citation>
    <scope>NUCLEOTIDE SEQUENCE [GENOMIC RNA]</scope>
</reference>
<dbReference type="EMBL" id="AF403405">
    <property type="protein sequence ID" value="AAM92752.1"/>
    <property type="molecule type" value="Genomic_RNA"/>
</dbReference>
<dbReference type="RefSeq" id="NP_938068.1">
    <property type="nucleotide sequence ID" value="NC_005173.1"/>
</dbReference>
<dbReference type="PDB" id="8FJK">
    <property type="method" value="EM"/>
    <property type="resolution" value="3.30 A"/>
    <property type="chains" value="V/W/X/a/b/d/e/g/h/n=2-412"/>
</dbReference>
<dbReference type="PDB" id="8FJL">
    <property type="method" value="EM"/>
    <property type="resolution" value="3.27 A"/>
    <property type="chains" value="V/W/X/a/b/d/e/g/h/n=2-412"/>
</dbReference>
<dbReference type="PDBsum" id="8FJK"/>
<dbReference type="PDBsum" id="8FJL"/>
<dbReference type="EMDB" id="EMD-29243"/>
<dbReference type="EMDB" id="EMD-29244"/>
<dbReference type="SMR" id="Q8JU54"/>
<dbReference type="KEGG" id="vg:2648337"/>
<dbReference type="Proteomes" id="UP000006713">
    <property type="component" value="Genome"/>
</dbReference>
<dbReference type="GO" id="GO:0039626">
    <property type="term" value="C:viral intermediate capsid"/>
    <property type="evidence" value="ECO:0007669"/>
    <property type="project" value="UniProtKB-KW"/>
</dbReference>
<dbReference type="Gene3D" id="1.10.287.1520">
    <property type="match status" value="1"/>
</dbReference>
<dbReference type="InterPro" id="IPR004317">
    <property type="entry name" value="Sigma_1_2_reovir"/>
</dbReference>
<dbReference type="Pfam" id="PF03084">
    <property type="entry name" value="Sigma_1_2"/>
    <property type="match status" value="1"/>
</dbReference>
<gene>
    <name type="primary">S8</name>
</gene>
<comment type="function">
    <text evidence="1">Located at the interface of the incomplete T=13 outer capsid and the pseudo T=2 inner capsid, 120 VP6 subunits clamp and stabilizes the inner capsid shell.</text>
</comment>
<comment type="subunit">
    <text evidence="1">Interacts with capsid proteins VP3, VP5 and VP7.</text>
</comment>
<comment type="subcellular location">
    <subcellularLocation>
        <location evidence="2">Virion</location>
    </subcellularLocation>
</comment>
<comment type="similarity">
    <text evidence="2">Belongs to the reoviridae clamp protein family.</text>
</comment>
<name>VP6_AQRVC</name>
<organism>
    <name type="scientific">Aquareovirus C (isolate Golden shiner/USA/GSRV/1977)</name>
    <name type="common">AQRV-C</name>
    <dbReference type="NCBI Taxonomy" id="185783"/>
    <lineage>
        <taxon>Viruses</taxon>
        <taxon>Riboviria</taxon>
        <taxon>Orthornavirae</taxon>
        <taxon>Duplornaviricota</taxon>
        <taxon>Resentoviricetes</taxon>
        <taxon>Reovirales</taxon>
        <taxon>Spinareoviridae</taxon>
        <taxon>Aquareovirus</taxon>
        <taxon>Aquareovirus ctenopharyngodontis</taxon>
    </lineage>
</organism>
<organismHost>
    <name type="scientific">Notemigonus crysoleucas</name>
    <name type="common">Golden shiner</name>
    <name type="synonym">Cyprinus crysoleucas</name>
    <dbReference type="NCBI Taxonomy" id="28800"/>
</organismHost>
<organismHost>
    <name type="scientific">Pimephales promelas</name>
    <name type="common">Fathead minnow</name>
    <dbReference type="NCBI Taxonomy" id="90988"/>
</organismHost>
<protein>
    <recommendedName>
        <fullName>Clamp protein VP6</fullName>
    </recommendedName>
</protein>
<feature type="chain" id="PRO_0000404191" description="Clamp protein VP6">
    <location>
        <begin position="1"/>
        <end position="412"/>
    </location>
</feature>
<evidence type="ECO:0000250" key="1"/>
<evidence type="ECO:0000305" key="2"/>
<sequence>MAQRQFFGLTYNFYGQPAPLFDLNDLQELAGCYARPWTSRFSHLAISTGSLPVWSARYPSVASRNIIVNTLLGAHLNPFAGGQVTSHQGITWRDPVLSSLAPVPAIQPPPVWAVAENVPLDSNNYPTYVLNLSSMWPINQDVHIMTMWALSDQGPIYHLEVPVDPMPAATTAALMAYIGVPIAHLAQTAYRFAGQLPQSPDSTMVSTIRWLSAIWFGSLTGRLNRSRTCNGFYFEFAKPALNPDQAVLKWNDGARAAPPAAAQSSYMRCISPHWQHQIVEVAGALMSQSVTAVTGLPALIDEATLPAWSQGVANLTGNGQGVVPCLDYNPVPMAAARHLQWRQDGLITAAQEAQLNNDYTAYALTIERHLTAMLVANPIAAGRMPIQPFNAADFGQAGQTAAAVALAQAMFV</sequence>